<evidence type="ECO:0000255" key="1">
    <source>
        <dbReference type="HAMAP-Rule" id="MF_00671"/>
    </source>
</evidence>
<sequence length="453" mass="50848">MYLIIKKTHKLPHWLQKVSLSIMLIIFLWKPALLADMHIEITCGVNAAHPIAVIPFTCVSNQYNKSISIEDIASIIAADLRNSSKFNTIPVEYLPHKPTKVSDVIPTFWEKLGINIIVLGTVHINYDESYIISYHLIDTSSNPALIISENQYSVEKKWLRYVAHAISNEIFEKLTGIKGAFCTRIAYVLRIHNDHYPYELYISDYDGHNQISICRSTEPLMSPAWSPDGKKIAYVTFASGHSELVIQALNTGLVNNIVSFPGHNGAPSFSPDCKKLAFSLSKTGSLNLYIMDLESGEITQLTKNRNNNTEPSWFPDNQNIAYTSDQGGSPQIYKINVKTTEIQRLSWLHTSNQNPNVSSDGTFIIMVNRHQGKQNIAKLNLLTGQEEILTDTLLADSPSIAPNNTMVLYSNINKDLTTKSNLELISIDGHFKAHIQGDQGDIRFPTWSPLHLE</sequence>
<comment type="function">
    <text evidence="1">Part of the Tol-Pal system, which plays a role in outer membrane invagination during cell division and is important for maintaining outer membrane integrity. TolB occupies a key intermediary position in the Tol-Pal system because it communicates directly with both membrane-embedded components, Pal in the outer membrane and TolA in the inner membrane.</text>
</comment>
<comment type="subunit">
    <text evidence="1">The Tol-Pal system is composed of five core proteins: the inner membrane proteins TolA, TolQ and TolR, the periplasmic protein TolB and the outer membrane protein Pal. They form a network linking the inner and outer membranes and the peptidoglycan layer.</text>
</comment>
<comment type="subcellular location">
    <subcellularLocation>
        <location evidence="1">Periplasm</location>
    </subcellularLocation>
</comment>
<comment type="similarity">
    <text evidence="1">Belongs to the TolB family.</text>
</comment>
<proteinExistence type="inferred from homology"/>
<organism>
    <name type="scientific">Blochmanniella pennsylvanica (strain BPEN)</name>
    <dbReference type="NCBI Taxonomy" id="291272"/>
    <lineage>
        <taxon>Bacteria</taxon>
        <taxon>Pseudomonadati</taxon>
        <taxon>Pseudomonadota</taxon>
        <taxon>Gammaproteobacteria</taxon>
        <taxon>Enterobacterales</taxon>
        <taxon>Enterobacteriaceae</taxon>
        <taxon>ant endosymbionts</taxon>
        <taxon>Candidatus Blochmanniella</taxon>
    </lineage>
</organism>
<keyword id="KW-0131">Cell cycle</keyword>
<keyword id="KW-0132">Cell division</keyword>
<keyword id="KW-0574">Periplasm</keyword>
<keyword id="KW-1185">Reference proteome</keyword>
<keyword id="KW-0732">Signal</keyword>
<protein>
    <recommendedName>
        <fullName evidence="1">Tol-Pal system protein TolB</fullName>
    </recommendedName>
</protein>
<reference key="1">
    <citation type="journal article" date="2005" name="Genome Res.">
        <title>Genome sequence of Blochmannia pennsylvanicus indicates parallel evolutionary trends among bacterial mutualists of insects.</title>
        <authorList>
            <person name="Degnan P.H."/>
            <person name="Lazarus A.B."/>
            <person name="Wernegreen J.J."/>
        </authorList>
    </citation>
    <scope>NUCLEOTIDE SEQUENCE [LARGE SCALE GENOMIC DNA]</scope>
    <source>
        <strain>BPEN</strain>
    </source>
</reference>
<dbReference type="EMBL" id="CP000016">
    <property type="protein sequence ID" value="AAZ40973.1"/>
    <property type="molecule type" value="Genomic_DNA"/>
</dbReference>
<dbReference type="SMR" id="Q492W9"/>
<dbReference type="STRING" id="291272.BPEN_348"/>
<dbReference type="KEGG" id="bpn:BPEN_348"/>
<dbReference type="eggNOG" id="COG0823">
    <property type="taxonomic scope" value="Bacteria"/>
</dbReference>
<dbReference type="HOGENOM" id="CLU_047123_0_0_6"/>
<dbReference type="OrthoDB" id="9802240at2"/>
<dbReference type="Proteomes" id="UP000007794">
    <property type="component" value="Chromosome"/>
</dbReference>
<dbReference type="GO" id="GO:0042597">
    <property type="term" value="C:periplasmic space"/>
    <property type="evidence" value="ECO:0007669"/>
    <property type="project" value="UniProtKB-SubCell"/>
</dbReference>
<dbReference type="GO" id="GO:0051301">
    <property type="term" value="P:cell division"/>
    <property type="evidence" value="ECO:0007669"/>
    <property type="project" value="UniProtKB-UniRule"/>
</dbReference>
<dbReference type="GO" id="GO:0017038">
    <property type="term" value="P:protein import"/>
    <property type="evidence" value="ECO:0007669"/>
    <property type="project" value="InterPro"/>
</dbReference>
<dbReference type="Gene3D" id="2.120.10.30">
    <property type="entry name" value="TolB, C-terminal domain"/>
    <property type="match status" value="1"/>
</dbReference>
<dbReference type="Gene3D" id="3.40.50.10070">
    <property type="entry name" value="TolB, N-terminal domain"/>
    <property type="match status" value="1"/>
</dbReference>
<dbReference type="HAMAP" id="MF_00671">
    <property type="entry name" value="TolB"/>
    <property type="match status" value="1"/>
</dbReference>
<dbReference type="InterPro" id="IPR011042">
    <property type="entry name" value="6-blade_b-propeller_TolB-like"/>
</dbReference>
<dbReference type="InterPro" id="IPR011659">
    <property type="entry name" value="PD40"/>
</dbReference>
<dbReference type="InterPro" id="IPR014167">
    <property type="entry name" value="Tol-Pal_TolB"/>
</dbReference>
<dbReference type="InterPro" id="IPR007195">
    <property type="entry name" value="TolB_N"/>
</dbReference>
<dbReference type="NCBIfam" id="TIGR02800">
    <property type="entry name" value="propeller_TolB"/>
    <property type="match status" value="1"/>
</dbReference>
<dbReference type="PANTHER" id="PTHR36842:SF1">
    <property type="entry name" value="PROTEIN TOLB"/>
    <property type="match status" value="1"/>
</dbReference>
<dbReference type="PANTHER" id="PTHR36842">
    <property type="entry name" value="PROTEIN TOLB HOMOLOG"/>
    <property type="match status" value="1"/>
</dbReference>
<dbReference type="Pfam" id="PF07676">
    <property type="entry name" value="PD40"/>
    <property type="match status" value="3"/>
</dbReference>
<dbReference type="Pfam" id="PF04052">
    <property type="entry name" value="TolB_N"/>
    <property type="match status" value="1"/>
</dbReference>
<dbReference type="SUPFAM" id="SSF52964">
    <property type="entry name" value="TolB, N-terminal domain"/>
    <property type="match status" value="1"/>
</dbReference>
<dbReference type="SUPFAM" id="SSF69304">
    <property type="entry name" value="Tricorn protease N-terminal domain"/>
    <property type="match status" value="1"/>
</dbReference>
<gene>
    <name evidence="1" type="primary">tolB</name>
    <name type="ordered locus">BPEN_348</name>
</gene>
<name>TOLB_BLOPB</name>
<accession>Q492W9</accession>
<feature type="signal peptide" evidence="1">
    <location>
        <begin position="1"/>
        <end position="34"/>
    </location>
</feature>
<feature type="chain" id="PRO_0000259030" description="Tol-Pal system protein TolB" evidence="1">
    <location>
        <begin position="35"/>
        <end position="453"/>
    </location>
</feature>